<comment type="catalytic activity">
    <reaction>
        <text>L-seryl-[protein] + ATP = O-phospho-L-seryl-[protein] + ADP + H(+)</text>
        <dbReference type="Rhea" id="RHEA:17989"/>
        <dbReference type="Rhea" id="RHEA-COMP:9863"/>
        <dbReference type="Rhea" id="RHEA-COMP:11604"/>
        <dbReference type="ChEBI" id="CHEBI:15378"/>
        <dbReference type="ChEBI" id="CHEBI:29999"/>
        <dbReference type="ChEBI" id="CHEBI:30616"/>
        <dbReference type="ChEBI" id="CHEBI:83421"/>
        <dbReference type="ChEBI" id="CHEBI:456216"/>
    </reaction>
</comment>
<comment type="catalytic activity">
    <reaction>
        <text>L-threonyl-[protein] + ATP = O-phospho-L-threonyl-[protein] + ADP + H(+)</text>
        <dbReference type="Rhea" id="RHEA:46608"/>
        <dbReference type="Rhea" id="RHEA-COMP:11060"/>
        <dbReference type="Rhea" id="RHEA-COMP:11605"/>
        <dbReference type="ChEBI" id="CHEBI:15378"/>
        <dbReference type="ChEBI" id="CHEBI:30013"/>
        <dbReference type="ChEBI" id="CHEBI:30616"/>
        <dbReference type="ChEBI" id="CHEBI:61977"/>
        <dbReference type="ChEBI" id="CHEBI:456216"/>
    </reaction>
</comment>
<comment type="subcellular location">
    <subcellularLocation>
        <location evidence="7">Membrane</location>
        <topology evidence="7">Single-pass membrane protein</topology>
    </subcellularLocation>
</comment>
<comment type="similarity">
    <text evidence="3">Belongs to the protein kinase superfamily. Ser/Thr protein kinase family. CRK subfamily.</text>
</comment>
<comment type="sequence caution" evidence="7">
    <conflict type="erroneous gene model prediction">
        <sequence resource="EMBL-CDS" id="CAA18477"/>
    </conflict>
</comment>
<comment type="sequence caution" evidence="7">
    <conflict type="erroneous gene model prediction">
        <sequence resource="EMBL-CDS" id="CAB79285"/>
    </conflict>
</comment>
<accession>Q6NQ87</accession>
<accession>O65481</accession>
<feature type="signal peptide" evidence="2">
    <location>
        <begin position="1"/>
        <end position="24"/>
    </location>
</feature>
<feature type="chain" id="PRO_0000295069" description="Cysteine-rich receptor-like protein kinase 22">
    <location>
        <begin position="25"/>
        <end position="660"/>
    </location>
</feature>
<feature type="topological domain" description="Extracellular" evidence="2">
    <location>
        <begin position="25"/>
        <end position="294"/>
    </location>
</feature>
<feature type="transmembrane region" description="Helical" evidence="2">
    <location>
        <begin position="295"/>
        <end position="315"/>
    </location>
</feature>
<feature type="topological domain" description="Cytoplasmic" evidence="2">
    <location>
        <begin position="316"/>
        <end position="660"/>
    </location>
</feature>
<feature type="domain" description="Gnk2-homologous 1" evidence="4">
    <location>
        <begin position="25"/>
        <end position="128"/>
    </location>
</feature>
<feature type="domain" description="Gnk2-homologous 2" evidence="4">
    <location>
        <begin position="137"/>
        <end position="250"/>
    </location>
</feature>
<feature type="domain" description="Protein kinase" evidence="3">
    <location>
        <begin position="353"/>
        <end position="632"/>
    </location>
</feature>
<feature type="region of interest" description="Disordered" evidence="6">
    <location>
        <begin position="264"/>
        <end position="283"/>
    </location>
</feature>
<feature type="compositionally biased region" description="Pro residues" evidence="6">
    <location>
        <begin position="264"/>
        <end position="273"/>
    </location>
</feature>
<feature type="active site" description="Proton acceptor" evidence="3 5">
    <location>
        <position position="478"/>
    </location>
</feature>
<feature type="binding site" evidence="3">
    <location>
        <begin position="359"/>
        <end position="367"/>
    </location>
    <ligand>
        <name>ATP</name>
        <dbReference type="ChEBI" id="CHEBI:30616"/>
    </ligand>
</feature>
<feature type="binding site" evidence="3">
    <location>
        <position position="381"/>
    </location>
    <ligand>
        <name>ATP</name>
        <dbReference type="ChEBI" id="CHEBI:30616"/>
    </ligand>
</feature>
<feature type="modified residue" description="Phosphotyrosine" evidence="1">
    <location>
        <position position="426"/>
    </location>
</feature>
<feature type="modified residue" description="Phosphoserine" evidence="1">
    <location>
        <position position="482"/>
    </location>
</feature>
<feature type="modified residue" description="Phosphothreonine" evidence="1">
    <location>
        <position position="518"/>
    </location>
</feature>
<feature type="modified residue" description="Phosphotyrosine" evidence="1">
    <location>
        <position position="526"/>
    </location>
</feature>
<feature type="glycosylation site" description="N-linked (GlcNAc...) asparagine" evidence="2">
    <location>
        <position position="37"/>
    </location>
</feature>
<feature type="glycosylation site" description="N-linked (GlcNAc...) asparagine" evidence="2">
    <location>
        <position position="53"/>
    </location>
</feature>
<feature type="glycosylation site" description="N-linked (GlcNAc...) asparagine" evidence="2">
    <location>
        <position position="105"/>
    </location>
</feature>
<feature type="glycosylation site" description="N-linked (GlcNAc...) asparagine" evidence="2">
    <location>
        <position position="125"/>
    </location>
</feature>
<feature type="glycosylation site" description="N-linked (GlcNAc...) asparagine" evidence="2">
    <location>
        <position position="191"/>
    </location>
</feature>
<feature type="glycosylation site" description="N-linked (GlcNAc...) asparagine" evidence="2">
    <location>
        <position position="230"/>
    </location>
</feature>
<feature type="glycosylation site" description="N-linked (GlcNAc...) asparagine" evidence="2">
    <location>
        <position position="256"/>
    </location>
</feature>
<feature type="glycosylation site" description="N-linked (GlcNAc...) asparagine" evidence="2">
    <location>
        <position position="280"/>
    </location>
</feature>
<feature type="glycosylation site" description="N-linked (GlcNAc...) asparagine" evidence="2">
    <location>
        <position position="284"/>
    </location>
</feature>
<gene>
    <name type="primary">CRK22</name>
    <name type="ordered locus">At4g23300</name>
    <name type="ORF">F21P8.190</name>
</gene>
<keyword id="KW-0067">ATP-binding</keyword>
<keyword id="KW-0325">Glycoprotein</keyword>
<keyword id="KW-0418">Kinase</keyword>
<keyword id="KW-0472">Membrane</keyword>
<keyword id="KW-0547">Nucleotide-binding</keyword>
<keyword id="KW-0597">Phosphoprotein</keyword>
<keyword id="KW-0675">Receptor</keyword>
<keyword id="KW-1185">Reference proteome</keyword>
<keyword id="KW-0677">Repeat</keyword>
<keyword id="KW-0723">Serine/threonine-protein kinase</keyword>
<keyword id="KW-0732">Signal</keyword>
<keyword id="KW-0808">Transferase</keyword>
<keyword id="KW-0812">Transmembrane</keyword>
<keyword id="KW-1133">Transmembrane helix</keyword>
<organism>
    <name type="scientific">Arabidopsis thaliana</name>
    <name type="common">Mouse-ear cress</name>
    <dbReference type="NCBI Taxonomy" id="3702"/>
    <lineage>
        <taxon>Eukaryota</taxon>
        <taxon>Viridiplantae</taxon>
        <taxon>Streptophyta</taxon>
        <taxon>Embryophyta</taxon>
        <taxon>Tracheophyta</taxon>
        <taxon>Spermatophyta</taxon>
        <taxon>Magnoliopsida</taxon>
        <taxon>eudicotyledons</taxon>
        <taxon>Gunneridae</taxon>
        <taxon>Pentapetalae</taxon>
        <taxon>rosids</taxon>
        <taxon>malvids</taxon>
        <taxon>Brassicales</taxon>
        <taxon>Brassicaceae</taxon>
        <taxon>Camelineae</taxon>
        <taxon>Arabidopsis</taxon>
    </lineage>
</organism>
<protein>
    <recommendedName>
        <fullName>Cysteine-rich receptor-like protein kinase 22</fullName>
        <shortName>Cysteine-rich RLK22</shortName>
        <ecNumber>2.7.11.-</ecNumber>
    </recommendedName>
</protein>
<sequence length="660" mass="73849">MKQRSFLSILCFILLAFGVASVSAQTCIENRKYFTPNGTYDSNRRLILSSLPNNTASQDGFYYGSIGEEQDRVYALGMCIPRSTPSDCFNCIKGAAGWLIQDCVNQTDAYYWALDPTLCLVRYSNISFSGSAAFWEIEPQYLVLNTATIASDLTDFKNIWEDLTSRTITAASAARSTPSSSDNHYRVDFANLTKFQNIYALMQCTPDISSDECNNCLQRGVLEYQSCCGNNTGGYVMRPICFFRWQLFTFSKAFHNITLATPPKPPMNVPRPPSVGHGANTTDNDSRGVSAGIVVVITVPAVVIVLILVVLGFFICWRRKSLQRTEFESDSDVSTTNSLQYEFKTIEAATNKFSKSNKLGEGRFGEVYKGKFSNGTEVAVKRLSKVSGQDTKKFRNEAVLVSKIQHRNLARLLGFCLQGDGKFLIYEFVLNKSLDYFLFDPEKQGELDWTRRYKIIGGIAQGILHLHQDPQLTIIYRDFKASNILLDADMNPKISDFGMATVFGMEESRGNTNWIAETFVYMSPEYAVHGKFSMKSDVYSFGILILEIISGKKNSSLYQNDETTTAGNLVTYAWRLWRNGSQLKLLDSSIGRNYQSNEVTRCIHIALLCVQENPEDRPKLSTIVSMLTSNTISVPAPGIPGFFPQSRRELDPLSEGLESG</sequence>
<name>CRK22_ARATH</name>
<dbReference type="EC" id="2.7.11.-"/>
<dbReference type="EMBL" id="AL022347">
    <property type="protein sequence ID" value="CAA18477.1"/>
    <property type="status" value="ALT_SEQ"/>
    <property type="molecule type" value="Genomic_DNA"/>
</dbReference>
<dbReference type="EMBL" id="AL161559">
    <property type="protein sequence ID" value="CAB79285.1"/>
    <property type="status" value="ALT_SEQ"/>
    <property type="molecule type" value="Genomic_DNA"/>
</dbReference>
<dbReference type="EMBL" id="CP002687">
    <property type="protein sequence ID" value="AEE84736.1"/>
    <property type="molecule type" value="Genomic_DNA"/>
</dbReference>
<dbReference type="EMBL" id="BT010572">
    <property type="protein sequence ID" value="AAQ65195.1"/>
    <property type="molecule type" value="mRNA"/>
</dbReference>
<dbReference type="EMBL" id="AK176570">
    <property type="protein sequence ID" value="BAD44333.1"/>
    <property type="molecule type" value="mRNA"/>
</dbReference>
<dbReference type="PIR" id="T04847">
    <property type="entry name" value="T04847"/>
</dbReference>
<dbReference type="RefSeq" id="NP_194061.2">
    <property type="nucleotide sequence ID" value="NM_118459.5"/>
</dbReference>
<dbReference type="SMR" id="Q6NQ87"/>
<dbReference type="STRING" id="3702.Q6NQ87"/>
<dbReference type="GlyCosmos" id="Q6NQ87">
    <property type="glycosylation" value="9 sites, No reported glycans"/>
</dbReference>
<dbReference type="GlyGen" id="Q6NQ87">
    <property type="glycosylation" value="9 sites"/>
</dbReference>
<dbReference type="iPTMnet" id="Q6NQ87"/>
<dbReference type="PaxDb" id="3702-AT4G23300.1"/>
<dbReference type="ProteomicsDB" id="220415"/>
<dbReference type="EnsemblPlants" id="AT4G23300.1">
    <property type="protein sequence ID" value="AT4G23300.1"/>
    <property type="gene ID" value="AT4G23300"/>
</dbReference>
<dbReference type="GeneID" id="828429"/>
<dbReference type="Gramene" id="AT4G23300.1">
    <property type="protein sequence ID" value="AT4G23300.1"/>
    <property type="gene ID" value="AT4G23300"/>
</dbReference>
<dbReference type="KEGG" id="ath:AT4G23300"/>
<dbReference type="Araport" id="AT4G23300"/>
<dbReference type="TAIR" id="AT4G23300">
    <property type="gene designation" value="CRK22"/>
</dbReference>
<dbReference type="eggNOG" id="ENOG502QWDY">
    <property type="taxonomic scope" value="Eukaryota"/>
</dbReference>
<dbReference type="HOGENOM" id="CLU_000288_35_2_1"/>
<dbReference type="InParanoid" id="Q6NQ87"/>
<dbReference type="OMA" id="FNANRRI"/>
<dbReference type="OrthoDB" id="688481at2759"/>
<dbReference type="PhylomeDB" id="Q6NQ87"/>
<dbReference type="PRO" id="PR:Q6NQ87"/>
<dbReference type="Proteomes" id="UP000006548">
    <property type="component" value="Chromosome 4"/>
</dbReference>
<dbReference type="ExpressionAtlas" id="Q6NQ87">
    <property type="expression patterns" value="baseline and differential"/>
</dbReference>
<dbReference type="GO" id="GO:0016020">
    <property type="term" value="C:membrane"/>
    <property type="evidence" value="ECO:0007669"/>
    <property type="project" value="UniProtKB-SubCell"/>
</dbReference>
<dbReference type="GO" id="GO:0005524">
    <property type="term" value="F:ATP binding"/>
    <property type="evidence" value="ECO:0007669"/>
    <property type="project" value="UniProtKB-KW"/>
</dbReference>
<dbReference type="GO" id="GO:0106310">
    <property type="term" value="F:protein serine kinase activity"/>
    <property type="evidence" value="ECO:0007669"/>
    <property type="project" value="RHEA"/>
</dbReference>
<dbReference type="GO" id="GO:0004674">
    <property type="term" value="F:protein serine/threonine kinase activity"/>
    <property type="evidence" value="ECO:0007669"/>
    <property type="project" value="UniProtKB-KW"/>
</dbReference>
<dbReference type="CDD" id="cd23509">
    <property type="entry name" value="Gnk2-like"/>
    <property type="match status" value="2"/>
</dbReference>
<dbReference type="CDD" id="cd14066">
    <property type="entry name" value="STKc_IRAK"/>
    <property type="match status" value="1"/>
</dbReference>
<dbReference type="FunFam" id="3.30.200.20:FF:000142">
    <property type="entry name" value="Cysteine-rich receptor-like protein kinase 10"/>
    <property type="match status" value="1"/>
</dbReference>
<dbReference type="FunFam" id="1.10.510.10:FF:000129">
    <property type="entry name" value="cysteine-rich receptor-like protein kinase 10"/>
    <property type="match status" value="1"/>
</dbReference>
<dbReference type="FunFam" id="3.30.430.20:FF:000007">
    <property type="entry name" value="Cysteine-rich receptor-like protein kinase 11"/>
    <property type="match status" value="1"/>
</dbReference>
<dbReference type="FunFam" id="3.30.430.20:FF:000003">
    <property type="entry name" value="Cysteine-rich RLK (RECEPTOR-like protein kinase) 10"/>
    <property type="match status" value="1"/>
</dbReference>
<dbReference type="Gene3D" id="3.30.430.20">
    <property type="entry name" value="Gnk2 domain, C-X8-C-X2-C motif"/>
    <property type="match status" value="2"/>
</dbReference>
<dbReference type="Gene3D" id="3.30.200.20">
    <property type="entry name" value="Phosphorylase Kinase, domain 1"/>
    <property type="match status" value="1"/>
</dbReference>
<dbReference type="Gene3D" id="1.10.510.10">
    <property type="entry name" value="Transferase(Phosphotransferase) domain 1"/>
    <property type="match status" value="1"/>
</dbReference>
<dbReference type="InterPro" id="IPR002902">
    <property type="entry name" value="GNK2"/>
</dbReference>
<dbReference type="InterPro" id="IPR038408">
    <property type="entry name" value="GNK2_sf"/>
</dbReference>
<dbReference type="InterPro" id="IPR011009">
    <property type="entry name" value="Kinase-like_dom_sf"/>
</dbReference>
<dbReference type="InterPro" id="IPR000719">
    <property type="entry name" value="Prot_kinase_dom"/>
</dbReference>
<dbReference type="InterPro" id="IPR017441">
    <property type="entry name" value="Protein_kinase_ATP_BS"/>
</dbReference>
<dbReference type="InterPro" id="IPR001245">
    <property type="entry name" value="Ser-Thr/Tyr_kinase_cat_dom"/>
</dbReference>
<dbReference type="InterPro" id="IPR008271">
    <property type="entry name" value="Ser/Thr_kinase_AS"/>
</dbReference>
<dbReference type="PANTHER" id="PTHR27002:SF453">
    <property type="entry name" value="CYSTEINE-RICH RECEPTOR-LIKE PROTEIN KINASE 22"/>
    <property type="match status" value="1"/>
</dbReference>
<dbReference type="PANTHER" id="PTHR27002">
    <property type="entry name" value="RECEPTOR-LIKE SERINE/THREONINE-PROTEIN KINASE SD1-8"/>
    <property type="match status" value="1"/>
</dbReference>
<dbReference type="Pfam" id="PF07714">
    <property type="entry name" value="PK_Tyr_Ser-Thr"/>
    <property type="match status" value="1"/>
</dbReference>
<dbReference type="Pfam" id="PF01657">
    <property type="entry name" value="Stress-antifung"/>
    <property type="match status" value="2"/>
</dbReference>
<dbReference type="SUPFAM" id="SSF56112">
    <property type="entry name" value="Protein kinase-like (PK-like)"/>
    <property type="match status" value="1"/>
</dbReference>
<dbReference type="PROSITE" id="PS51473">
    <property type="entry name" value="GNK2"/>
    <property type="match status" value="2"/>
</dbReference>
<dbReference type="PROSITE" id="PS00107">
    <property type="entry name" value="PROTEIN_KINASE_ATP"/>
    <property type="match status" value="1"/>
</dbReference>
<dbReference type="PROSITE" id="PS50011">
    <property type="entry name" value="PROTEIN_KINASE_DOM"/>
    <property type="match status" value="1"/>
</dbReference>
<dbReference type="PROSITE" id="PS00108">
    <property type="entry name" value="PROTEIN_KINASE_ST"/>
    <property type="match status" value="1"/>
</dbReference>
<proteinExistence type="evidence at transcript level"/>
<evidence type="ECO:0000250" key="1">
    <source>
        <dbReference type="UniProtKB" id="O48814"/>
    </source>
</evidence>
<evidence type="ECO:0000255" key="2"/>
<evidence type="ECO:0000255" key="3">
    <source>
        <dbReference type="PROSITE-ProRule" id="PRU00159"/>
    </source>
</evidence>
<evidence type="ECO:0000255" key="4">
    <source>
        <dbReference type="PROSITE-ProRule" id="PRU00806"/>
    </source>
</evidence>
<evidence type="ECO:0000255" key="5">
    <source>
        <dbReference type="PROSITE-ProRule" id="PRU10027"/>
    </source>
</evidence>
<evidence type="ECO:0000256" key="6">
    <source>
        <dbReference type="SAM" id="MobiDB-lite"/>
    </source>
</evidence>
<evidence type="ECO:0000305" key="7"/>
<reference key="1">
    <citation type="journal article" date="1999" name="Nature">
        <title>Sequence and analysis of chromosome 4 of the plant Arabidopsis thaliana.</title>
        <authorList>
            <person name="Mayer K.F.X."/>
            <person name="Schueller C."/>
            <person name="Wambutt R."/>
            <person name="Murphy G."/>
            <person name="Volckaert G."/>
            <person name="Pohl T."/>
            <person name="Duesterhoeft A."/>
            <person name="Stiekema W."/>
            <person name="Entian K.-D."/>
            <person name="Terryn N."/>
            <person name="Harris B."/>
            <person name="Ansorge W."/>
            <person name="Brandt P."/>
            <person name="Grivell L.A."/>
            <person name="Rieger M."/>
            <person name="Weichselgartner M."/>
            <person name="de Simone V."/>
            <person name="Obermaier B."/>
            <person name="Mache R."/>
            <person name="Mueller M."/>
            <person name="Kreis M."/>
            <person name="Delseny M."/>
            <person name="Puigdomenech P."/>
            <person name="Watson M."/>
            <person name="Schmidtheini T."/>
            <person name="Reichert B."/>
            <person name="Portetelle D."/>
            <person name="Perez-Alonso M."/>
            <person name="Boutry M."/>
            <person name="Bancroft I."/>
            <person name="Vos P."/>
            <person name="Hoheisel J."/>
            <person name="Zimmermann W."/>
            <person name="Wedler H."/>
            <person name="Ridley P."/>
            <person name="Langham S.-A."/>
            <person name="McCullagh B."/>
            <person name="Bilham L."/>
            <person name="Robben J."/>
            <person name="van der Schueren J."/>
            <person name="Grymonprez B."/>
            <person name="Chuang Y.-J."/>
            <person name="Vandenbussche F."/>
            <person name="Braeken M."/>
            <person name="Weltjens I."/>
            <person name="Voet M."/>
            <person name="Bastiaens I."/>
            <person name="Aert R."/>
            <person name="Defoor E."/>
            <person name="Weitzenegger T."/>
            <person name="Bothe G."/>
            <person name="Ramsperger U."/>
            <person name="Hilbert H."/>
            <person name="Braun M."/>
            <person name="Holzer E."/>
            <person name="Brandt A."/>
            <person name="Peters S."/>
            <person name="van Staveren M."/>
            <person name="Dirkse W."/>
            <person name="Mooijman P."/>
            <person name="Klein Lankhorst R."/>
            <person name="Rose M."/>
            <person name="Hauf J."/>
            <person name="Koetter P."/>
            <person name="Berneiser S."/>
            <person name="Hempel S."/>
            <person name="Feldpausch M."/>
            <person name="Lamberth S."/>
            <person name="Van den Daele H."/>
            <person name="De Keyser A."/>
            <person name="Buysshaert C."/>
            <person name="Gielen J."/>
            <person name="Villarroel R."/>
            <person name="De Clercq R."/>
            <person name="van Montagu M."/>
            <person name="Rogers J."/>
            <person name="Cronin A."/>
            <person name="Quail M.A."/>
            <person name="Bray-Allen S."/>
            <person name="Clark L."/>
            <person name="Doggett J."/>
            <person name="Hall S."/>
            <person name="Kay M."/>
            <person name="Lennard N."/>
            <person name="McLay K."/>
            <person name="Mayes R."/>
            <person name="Pettett A."/>
            <person name="Rajandream M.A."/>
            <person name="Lyne M."/>
            <person name="Benes V."/>
            <person name="Rechmann S."/>
            <person name="Borkova D."/>
            <person name="Bloecker H."/>
            <person name="Scharfe M."/>
            <person name="Grimm M."/>
            <person name="Loehnert T.-H."/>
            <person name="Dose S."/>
            <person name="de Haan M."/>
            <person name="Maarse A.C."/>
            <person name="Schaefer M."/>
            <person name="Mueller-Auer S."/>
            <person name="Gabel C."/>
            <person name="Fuchs M."/>
            <person name="Fartmann B."/>
            <person name="Granderath K."/>
            <person name="Dauner D."/>
            <person name="Herzl A."/>
            <person name="Neumann S."/>
            <person name="Argiriou A."/>
            <person name="Vitale D."/>
            <person name="Liguori R."/>
            <person name="Piravandi E."/>
            <person name="Massenet O."/>
            <person name="Quigley F."/>
            <person name="Clabauld G."/>
            <person name="Muendlein A."/>
            <person name="Felber R."/>
            <person name="Schnabl S."/>
            <person name="Hiller R."/>
            <person name="Schmidt W."/>
            <person name="Lecharny A."/>
            <person name="Aubourg S."/>
            <person name="Chefdor F."/>
            <person name="Cooke R."/>
            <person name="Berger C."/>
            <person name="Monfort A."/>
            <person name="Casacuberta E."/>
            <person name="Gibbons T."/>
            <person name="Weber N."/>
            <person name="Vandenbol M."/>
            <person name="Bargues M."/>
            <person name="Terol J."/>
            <person name="Torres A."/>
            <person name="Perez-Perez A."/>
            <person name="Purnelle B."/>
            <person name="Bent E."/>
            <person name="Johnson S."/>
            <person name="Tacon D."/>
            <person name="Jesse T."/>
            <person name="Heijnen L."/>
            <person name="Schwarz S."/>
            <person name="Scholler P."/>
            <person name="Heber S."/>
            <person name="Francs P."/>
            <person name="Bielke C."/>
            <person name="Frishman D."/>
            <person name="Haase D."/>
            <person name="Lemcke K."/>
            <person name="Mewes H.-W."/>
            <person name="Stocker S."/>
            <person name="Zaccaria P."/>
            <person name="Bevan M."/>
            <person name="Wilson R.K."/>
            <person name="de la Bastide M."/>
            <person name="Habermann K."/>
            <person name="Parnell L."/>
            <person name="Dedhia N."/>
            <person name="Gnoj L."/>
            <person name="Schutz K."/>
            <person name="Huang E."/>
            <person name="Spiegel L."/>
            <person name="Sekhon M."/>
            <person name="Murray J."/>
            <person name="Sheet P."/>
            <person name="Cordes M."/>
            <person name="Abu-Threideh J."/>
            <person name="Stoneking T."/>
            <person name="Kalicki J."/>
            <person name="Graves T."/>
            <person name="Harmon G."/>
            <person name="Edwards J."/>
            <person name="Latreille P."/>
            <person name="Courtney L."/>
            <person name="Cloud J."/>
            <person name="Abbott A."/>
            <person name="Scott K."/>
            <person name="Johnson D."/>
            <person name="Minx P."/>
            <person name="Bentley D."/>
            <person name="Fulton B."/>
            <person name="Miller N."/>
            <person name="Greco T."/>
            <person name="Kemp K."/>
            <person name="Kramer J."/>
            <person name="Fulton L."/>
            <person name="Mardis E."/>
            <person name="Dante M."/>
            <person name="Pepin K."/>
            <person name="Hillier L.W."/>
            <person name="Nelson J."/>
            <person name="Spieth J."/>
            <person name="Ryan E."/>
            <person name="Andrews S."/>
            <person name="Geisel C."/>
            <person name="Layman D."/>
            <person name="Du H."/>
            <person name="Ali J."/>
            <person name="Berghoff A."/>
            <person name="Jones K."/>
            <person name="Drone K."/>
            <person name="Cotton M."/>
            <person name="Joshu C."/>
            <person name="Antonoiu B."/>
            <person name="Zidanic M."/>
            <person name="Strong C."/>
            <person name="Sun H."/>
            <person name="Lamar B."/>
            <person name="Yordan C."/>
            <person name="Ma P."/>
            <person name="Zhong J."/>
            <person name="Preston R."/>
            <person name="Vil D."/>
            <person name="Shekher M."/>
            <person name="Matero A."/>
            <person name="Shah R."/>
            <person name="Swaby I.K."/>
            <person name="O'Shaughnessy A."/>
            <person name="Rodriguez M."/>
            <person name="Hoffman J."/>
            <person name="Till S."/>
            <person name="Granat S."/>
            <person name="Shohdy N."/>
            <person name="Hasegawa A."/>
            <person name="Hameed A."/>
            <person name="Lodhi M."/>
            <person name="Johnson A."/>
            <person name="Chen E."/>
            <person name="Marra M.A."/>
            <person name="Martienssen R."/>
            <person name="McCombie W.R."/>
        </authorList>
    </citation>
    <scope>NUCLEOTIDE SEQUENCE [LARGE SCALE GENOMIC DNA]</scope>
    <source>
        <strain>cv. Columbia</strain>
    </source>
</reference>
<reference key="2">
    <citation type="journal article" date="2017" name="Plant J.">
        <title>Araport11: a complete reannotation of the Arabidopsis thaliana reference genome.</title>
        <authorList>
            <person name="Cheng C.Y."/>
            <person name="Krishnakumar V."/>
            <person name="Chan A.P."/>
            <person name="Thibaud-Nissen F."/>
            <person name="Schobel S."/>
            <person name="Town C.D."/>
        </authorList>
    </citation>
    <scope>GENOME REANNOTATION</scope>
    <source>
        <strain>cv. Columbia</strain>
    </source>
</reference>
<reference key="3">
    <citation type="journal article" date="2003" name="Science">
        <title>Empirical analysis of transcriptional activity in the Arabidopsis genome.</title>
        <authorList>
            <person name="Yamada K."/>
            <person name="Lim J."/>
            <person name="Dale J.M."/>
            <person name="Chen H."/>
            <person name="Shinn P."/>
            <person name="Palm C.J."/>
            <person name="Southwick A.M."/>
            <person name="Wu H.C."/>
            <person name="Kim C.J."/>
            <person name="Nguyen M."/>
            <person name="Pham P.K."/>
            <person name="Cheuk R.F."/>
            <person name="Karlin-Newmann G."/>
            <person name="Liu S.X."/>
            <person name="Lam B."/>
            <person name="Sakano H."/>
            <person name="Wu T."/>
            <person name="Yu G."/>
            <person name="Miranda M."/>
            <person name="Quach H.L."/>
            <person name="Tripp M."/>
            <person name="Chang C.H."/>
            <person name="Lee J.M."/>
            <person name="Toriumi M.J."/>
            <person name="Chan M.M."/>
            <person name="Tang C.C."/>
            <person name="Onodera C.S."/>
            <person name="Deng J.M."/>
            <person name="Akiyama K."/>
            <person name="Ansari Y."/>
            <person name="Arakawa T."/>
            <person name="Banh J."/>
            <person name="Banno F."/>
            <person name="Bowser L."/>
            <person name="Brooks S.Y."/>
            <person name="Carninci P."/>
            <person name="Chao Q."/>
            <person name="Choy N."/>
            <person name="Enju A."/>
            <person name="Goldsmith A.D."/>
            <person name="Gurjal M."/>
            <person name="Hansen N.F."/>
            <person name="Hayashizaki Y."/>
            <person name="Johnson-Hopson C."/>
            <person name="Hsuan V.W."/>
            <person name="Iida K."/>
            <person name="Karnes M."/>
            <person name="Khan S."/>
            <person name="Koesema E."/>
            <person name="Ishida J."/>
            <person name="Jiang P.X."/>
            <person name="Jones T."/>
            <person name="Kawai J."/>
            <person name="Kamiya A."/>
            <person name="Meyers C."/>
            <person name="Nakajima M."/>
            <person name="Narusaka M."/>
            <person name="Seki M."/>
            <person name="Sakurai T."/>
            <person name="Satou M."/>
            <person name="Tamse R."/>
            <person name="Vaysberg M."/>
            <person name="Wallender E.K."/>
            <person name="Wong C."/>
            <person name="Yamamura Y."/>
            <person name="Yuan S."/>
            <person name="Shinozaki K."/>
            <person name="Davis R.W."/>
            <person name="Theologis A."/>
            <person name="Ecker J.R."/>
        </authorList>
    </citation>
    <scope>NUCLEOTIDE SEQUENCE [LARGE SCALE MRNA]</scope>
    <source>
        <strain>cv. Columbia</strain>
    </source>
</reference>
<reference key="4">
    <citation type="submission" date="2004-09" db="EMBL/GenBank/DDBJ databases">
        <title>Large-scale analysis of RIKEN Arabidopsis full-length (RAFL) cDNAs.</title>
        <authorList>
            <person name="Totoki Y."/>
            <person name="Seki M."/>
            <person name="Ishida J."/>
            <person name="Nakajima M."/>
            <person name="Enju A."/>
            <person name="Kamiya A."/>
            <person name="Narusaka M."/>
            <person name="Shin-i T."/>
            <person name="Nakagawa M."/>
            <person name="Sakamoto N."/>
            <person name="Oishi K."/>
            <person name="Kohara Y."/>
            <person name="Kobayashi M."/>
            <person name="Toyoda A."/>
            <person name="Sakaki Y."/>
            <person name="Sakurai T."/>
            <person name="Iida K."/>
            <person name="Akiyama K."/>
            <person name="Satou M."/>
            <person name="Toyoda T."/>
            <person name="Konagaya A."/>
            <person name="Carninci P."/>
            <person name="Kawai J."/>
            <person name="Hayashizaki Y."/>
            <person name="Shinozaki K."/>
        </authorList>
    </citation>
    <scope>NUCLEOTIDE SEQUENCE [LARGE SCALE MRNA]</scope>
    <source>
        <strain>cv. Columbia</strain>
    </source>
</reference>
<reference key="5">
    <citation type="journal article" date="2001" name="Plant Physiol.">
        <title>A superfamily of proteins with novel cysteine-rich repeats.</title>
        <authorList>
            <person name="Chen Z."/>
        </authorList>
    </citation>
    <scope>GENE FAMILY ORGANIZATION</scope>
    <scope>NOMENCLATURE</scope>
</reference>